<comment type="function">
    <text evidence="1">Required for rescue of stalled ribosomes mediated by trans-translation. Binds to transfer-messenger RNA (tmRNA), required for stable association of tmRNA with ribosomes. tmRNA and SmpB together mimic tRNA shape, replacing the anticodon stem-loop with SmpB. tmRNA is encoded by the ssrA gene; the 2 termini fold to resemble tRNA(Ala) and it encodes a 'tag peptide', a short internal open reading frame. During trans-translation Ala-aminoacylated tmRNA acts like a tRNA, entering the A-site of stalled ribosomes, displacing the stalled mRNA. The ribosome then switches to translate the ORF on the tmRNA; the nascent peptide is terminated with the 'tag peptide' encoded by the tmRNA and targeted for degradation. The ribosome is freed to recommence translation, which seems to be the essential function of trans-translation.</text>
</comment>
<comment type="subcellular location">
    <subcellularLocation>
        <location evidence="1">Cytoplasm</location>
    </subcellularLocation>
    <text evidence="1">The tmRNA-SmpB complex associates with stalled 70S ribosomes.</text>
</comment>
<comment type="similarity">
    <text evidence="1">Belongs to the SmpB family.</text>
</comment>
<reference key="1">
    <citation type="journal article" date="2015" name="Proc. Natl. Acad. Sci. U.S.A.">
        <title>Trichodesmium genome maintains abundant, widespread noncoding DNA in situ, despite oligotrophic lifestyle.</title>
        <authorList>
            <person name="Walworth N."/>
            <person name="Pfreundt U."/>
            <person name="Nelson W.C."/>
            <person name="Mincer T."/>
            <person name="Heidelberg J.F."/>
            <person name="Fu F."/>
            <person name="Waterbury J.B."/>
            <person name="Glavina del Rio T."/>
            <person name="Goodwin L."/>
            <person name="Kyrpides N.C."/>
            <person name="Land M.L."/>
            <person name="Woyke T."/>
            <person name="Hutchins D.A."/>
            <person name="Hess W.R."/>
            <person name="Webb E.A."/>
        </authorList>
    </citation>
    <scope>NUCLEOTIDE SEQUENCE [LARGE SCALE GENOMIC DNA]</scope>
    <source>
        <strain>IMS101</strain>
    </source>
</reference>
<sequence length="156" mass="18350">MAKKSGEGQKIISDNRQARFNYHIIETYEAGVALQGTEVKSIREGKVNLRDGYALIRNNEAWLLNVHISPYQKAGDFFNHEPRRSRRLLLHKQEIRKLIGKVEQQGLTLVPLRMYFKRGWVKVDIALAQGKKLYDKRETIKRRDDKRAMQRAIKQY</sequence>
<evidence type="ECO:0000255" key="1">
    <source>
        <dbReference type="HAMAP-Rule" id="MF_00023"/>
    </source>
</evidence>
<keyword id="KW-0963">Cytoplasm</keyword>
<keyword id="KW-0694">RNA-binding</keyword>
<proteinExistence type="inferred from homology"/>
<name>SSRP_TRIEI</name>
<dbReference type="EMBL" id="CP000393">
    <property type="protein sequence ID" value="ABG51562.1"/>
    <property type="molecule type" value="Genomic_DNA"/>
</dbReference>
<dbReference type="RefSeq" id="WP_011611929.1">
    <property type="nucleotide sequence ID" value="NC_008312.1"/>
</dbReference>
<dbReference type="SMR" id="Q112L2"/>
<dbReference type="STRING" id="203124.Tery_2342"/>
<dbReference type="KEGG" id="ter:Tery_2342"/>
<dbReference type="eggNOG" id="COG0691">
    <property type="taxonomic scope" value="Bacteria"/>
</dbReference>
<dbReference type="HOGENOM" id="CLU_108953_0_1_3"/>
<dbReference type="OrthoDB" id="9805462at2"/>
<dbReference type="GO" id="GO:0005829">
    <property type="term" value="C:cytosol"/>
    <property type="evidence" value="ECO:0007669"/>
    <property type="project" value="TreeGrafter"/>
</dbReference>
<dbReference type="GO" id="GO:0003723">
    <property type="term" value="F:RNA binding"/>
    <property type="evidence" value="ECO:0007669"/>
    <property type="project" value="UniProtKB-UniRule"/>
</dbReference>
<dbReference type="GO" id="GO:0070929">
    <property type="term" value="P:trans-translation"/>
    <property type="evidence" value="ECO:0007669"/>
    <property type="project" value="UniProtKB-UniRule"/>
</dbReference>
<dbReference type="CDD" id="cd09294">
    <property type="entry name" value="SmpB"/>
    <property type="match status" value="1"/>
</dbReference>
<dbReference type="Gene3D" id="2.40.280.10">
    <property type="match status" value="1"/>
</dbReference>
<dbReference type="HAMAP" id="MF_00023">
    <property type="entry name" value="SmpB"/>
    <property type="match status" value="1"/>
</dbReference>
<dbReference type="InterPro" id="IPR023620">
    <property type="entry name" value="SmpB"/>
</dbReference>
<dbReference type="InterPro" id="IPR000037">
    <property type="entry name" value="SsrA-bd_prot"/>
</dbReference>
<dbReference type="InterPro" id="IPR020081">
    <property type="entry name" value="SsrA-bd_prot_CS"/>
</dbReference>
<dbReference type="NCBIfam" id="NF003843">
    <property type="entry name" value="PRK05422.1"/>
    <property type="match status" value="1"/>
</dbReference>
<dbReference type="NCBIfam" id="TIGR00086">
    <property type="entry name" value="smpB"/>
    <property type="match status" value="1"/>
</dbReference>
<dbReference type="PANTHER" id="PTHR30308:SF2">
    <property type="entry name" value="SSRA-BINDING PROTEIN"/>
    <property type="match status" value="1"/>
</dbReference>
<dbReference type="PANTHER" id="PTHR30308">
    <property type="entry name" value="TMRNA-BINDING COMPONENT OF TRANS-TRANSLATION TAGGING COMPLEX"/>
    <property type="match status" value="1"/>
</dbReference>
<dbReference type="Pfam" id="PF01668">
    <property type="entry name" value="SmpB"/>
    <property type="match status" value="1"/>
</dbReference>
<dbReference type="SUPFAM" id="SSF74982">
    <property type="entry name" value="Small protein B (SmpB)"/>
    <property type="match status" value="1"/>
</dbReference>
<dbReference type="PROSITE" id="PS01317">
    <property type="entry name" value="SSRP"/>
    <property type="match status" value="1"/>
</dbReference>
<feature type="chain" id="PRO_0000331110" description="SsrA-binding protein">
    <location>
        <begin position="1"/>
        <end position="156"/>
    </location>
</feature>
<gene>
    <name evidence="1" type="primary">smpB</name>
    <name type="ordered locus">Tery_2342</name>
</gene>
<organism>
    <name type="scientific">Trichodesmium erythraeum (strain IMS101)</name>
    <dbReference type="NCBI Taxonomy" id="203124"/>
    <lineage>
        <taxon>Bacteria</taxon>
        <taxon>Bacillati</taxon>
        <taxon>Cyanobacteriota</taxon>
        <taxon>Cyanophyceae</taxon>
        <taxon>Oscillatoriophycideae</taxon>
        <taxon>Oscillatoriales</taxon>
        <taxon>Microcoleaceae</taxon>
        <taxon>Trichodesmium</taxon>
    </lineage>
</organism>
<protein>
    <recommendedName>
        <fullName evidence="1">SsrA-binding protein</fullName>
    </recommendedName>
    <alternativeName>
        <fullName evidence="1">Small protein B</fullName>
    </alternativeName>
</protein>
<accession>Q112L2</accession>